<proteinExistence type="inferred from homology"/>
<sequence>MDFNKENINMVDAKKAKKTVVATGIGNAMEWFDFGVYAYTTAYIGANFFSPVENADIRQMLTFAALAIAFLLRPIGGVVFGIIGDKYGRKVVLTSTIILMAFSTLTIGLLPSYDQIGLWAPILLLLARVLQGFSTGGEYAGAMTYVAESSPDKRRNSLGSGLEIGTLSGYIAASIMIAVLTFFLTDEQMASFGWRIPFLLGLFLGLFGLYLRRKLEESPVFENDVATQPERDNINFLQIIRFYYKDIFVCFVAVVFFNVTNYMVTAYLPTYLEQVIKLDATTTSVLITCVMAIMIPLALMFGKLADKIGEKKVFLIGTGGLTLFSIIAFMLLHSQSFVVIVIGIFILGFFLSTYEATMPGSLPTMFYSHIRYRTLSVTFNISVSIFGGTTPLVATWLVTKTGDPLAPAYYLTAISVIGFLVITFLHLSTAGKSLKGSYPNVDNEQDRAYYAEHPKEALWWVKERKN</sequence>
<keyword id="KW-1003">Cell membrane</keyword>
<keyword id="KW-0472">Membrane</keyword>
<keyword id="KW-0769">Symport</keyword>
<keyword id="KW-0812">Transmembrane</keyword>
<keyword id="KW-1133">Transmembrane helix</keyword>
<keyword id="KW-0813">Transport</keyword>
<reference key="1">
    <citation type="journal article" date="2001" name="Lancet">
        <title>Whole genome sequencing of meticillin-resistant Staphylococcus aureus.</title>
        <authorList>
            <person name="Kuroda M."/>
            <person name="Ohta T."/>
            <person name="Uchiyama I."/>
            <person name="Baba T."/>
            <person name="Yuzawa H."/>
            <person name="Kobayashi I."/>
            <person name="Cui L."/>
            <person name="Oguchi A."/>
            <person name="Aoki K."/>
            <person name="Nagai Y."/>
            <person name="Lian J.-Q."/>
            <person name="Ito T."/>
            <person name="Kanamori M."/>
            <person name="Matsumaru H."/>
            <person name="Maruyama A."/>
            <person name="Murakami H."/>
            <person name="Hosoyama A."/>
            <person name="Mizutani-Ui Y."/>
            <person name="Takahashi N.K."/>
            <person name="Sawano T."/>
            <person name="Inoue R."/>
            <person name="Kaito C."/>
            <person name="Sekimizu K."/>
            <person name="Hirakawa H."/>
            <person name="Kuhara S."/>
            <person name="Goto S."/>
            <person name="Yabuzaki J."/>
            <person name="Kanehisa M."/>
            <person name="Yamashita A."/>
            <person name="Oshima K."/>
            <person name="Furuya K."/>
            <person name="Yoshino C."/>
            <person name="Shiba T."/>
            <person name="Hattori M."/>
            <person name="Ogasawara N."/>
            <person name="Hayashi H."/>
            <person name="Hiramatsu K."/>
        </authorList>
    </citation>
    <scope>NUCLEOTIDE SEQUENCE [LARGE SCALE GENOMIC DNA]</scope>
    <source>
        <strain>N315</strain>
    </source>
</reference>
<name>PROP_STAAN</name>
<accession>Q7A771</accession>
<comment type="function">
    <text evidence="1">May be a proton symporter involved in the uptake of osmolytes such as proline and glycine betaine.</text>
</comment>
<comment type="subcellular location">
    <subcellularLocation>
        <location evidence="3">Cell membrane</location>
        <topology evidence="3">Multi-pass membrane protein</topology>
    </subcellularLocation>
</comment>
<comment type="similarity">
    <text evidence="3">Belongs to the major facilitator superfamily. Metabolite:H+ Symporter (MHS) family (TC 2.A.1.6) family.</text>
</comment>
<dbReference type="EMBL" id="BA000018">
    <property type="protein sequence ID" value="BAB41762.1"/>
    <property type="molecule type" value="Genomic_DNA"/>
</dbReference>
<dbReference type="PIR" id="G89825">
    <property type="entry name" value="G89825"/>
</dbReference>
<dbReference type="RefSeq" id="WP_000347061.1">
    <property type="nucleotide sequence ID" value="NC_002745.2"/>
</dbReference>
<dbReference type="SMR" id="Q7A771"/>
<dbReference type="EnsemblBacteria" id="BAB41762">
    <property type="protein sequence ID" value="BAB41762"/>
    <property type="gene ID" value="BAB41762"/>
</dbReference>
<dbReference type="KEGG" id="sau:SA0531"/>
<dbReference type="HOGENOM" id="CLU_001265_39_5_9"/>
<dbReference type="GO" id="GO:0005886">
    <property type="term" value="C:plasma membrane"/>
    <property type="evidence" value="ECO:0007669"/>
    <property type="project" value="UniProtKB-SubCell"/>
</dbReference>
<dbReference type="GO" id="GO:0015293">
    <property type="term" value="F:symporter activity"/>
    <property type="evidence" value="ECO:0007669"/>
    <property type="project" value="UniProtKB-KW"/>
</dbReference>
<dbReference type="CDD" id="cd17366">
    <property type="entry name" value="MFS_ProP"/>
    <property type="match status" value="1"/>
</dbReference>
<dbReference type="FunFam" id="1.20.1250.20:FF:000001">
    <property type="entry name" value="Dicarboxylate MFS transporter"/>
    <property type="match status" value="1"/>
</dbReference>
<dbReference type="FunFam" id="1.20.1250.20:FF:000236">
    <property type="entry name" value="Proline/betaine transporter, putative"/>
    <property type="match status" value="1"/>
</dbReference>
<dbReference type="Gene3D" id="1.20.1250.20">
    <property type="entry name" value="MFS general substrate transporter like domains"/>
    <property type="match status" value="2"/>
</dbReference>
<dbReference type="InterPro" id="IPR051084">
    <property type="entry name" value="H+-coupled_symporters"/>
</dbReference>
<dbReference type="InterPro" id="IPR011701">
    <property type="entry name" value="MFS"/>
</dbReference>
<dbReference type="InterPro" id="IPR020846">
    <property type="entry name" value="MFS_dom"/>
</dbReference>
<dbReference type="InterPro" id="IPR036259">
    <property type="entry name" value="MFS_trans_sf"/>
</dbReference>
<dbReference type="InterPro" id="IPR005829">
    <property type="entry name" value="Sugar_transporter_CS"/>
</dbReference>
<dbReference type="PANTHER" id="PTHR43528">
    <property type="entry name" value="ALPHA-KETOGLUTARATE PERMEASE"/>
    <property type="match status" value="1"/>
</dbReference>
<dbReference type="PANTHER" id="PTHR43528:SF1">
    <property type="entry name" value="ALPHA-KETOGLUTARATE PERMEASE"/>
    <property type="match status" value="1"/>
</dbReference>
<dbReference type="Pfam" id="PF07690">
    <property type="entry name" value="MFS_1"/>
    <property type="match status" value="1"/>
</dbReference>
<dbReference type="SUPFAM" id="SSF103473">
    <property type="entry name" value="MFS general substrate transporter"/>
    <property type="match status" value="1"/>
</dbReference>
<dbReference type="PROSITE" id="PS50850">
    <property type="entry name" value="MFS"/>
    <property type="match status" value="1"/>
</dbReference>
<dbReference type="PROSITE" id="PS00217">
    <property type="entry name" value="SUGAR_TRANSPORT_2"/>
    <property type="match status" value="1"/>
</dbReference>
<feature type="chain" id="PRO_0000050329" description="Putative proline/betaine transporter">
    <location>
        <begin position="1"/>
        <end position="466"/>
    </location>
</feature>
<feature type="transmembrane region" description="Helical" evidence="2">
    <location>
        <begin position="20"/>
        <end position="42"/>
    </location>
</feature>
<feature type="transmembrane region" description="Helical" evidence="2">
    <location>
        <begin position="63"/>
        <end position="83"/>
    </location>
</feature>
<feature type="transmembrane region" description="Helical" evidence="2">
    <location>
        <begin position="91"/>
        <end position="111"/>
    </location>
</feature>
<feature type="transmembrane region" description="Helical" evidence="2">
    <location>
        <begin position="116"/>
        <end position="136"/>
    </location>
</feature>
<feature type="transmembrane region" description="Helical" evidence="2">
    <location>
        <begin position="164"/>
        <end position="184"/>
    </location>
</feature>
<feature type="transmembrane region" description="Helical" evidence="2">
    <location>
        <begin position="191"/>
        <end position="211"/>
    </location>
</feature>
<feature type="transmembrane region" description="Helical" evidence="2">
    <location>
        <begin position="247"/>
        <end position="267"/>
    </location>
</feature>
<feature type="transmembrane region" description="Helical" evidence="2">
    <location>
        <begin position="285"/>
        <end position="305"/>
    </location>
</feature>
<feature type="transmembrane region" description="Helical" evidence="2">
    <location>
        <begin position="313"/>
        <end position="332"/>
    </location>
</feature>
<feature type="transmembrane region" description="Helical" evidence="2">
    <location>
        <begin position="337"/>
        <end position="354"/>
    </location>
</feature>
<feature type="transmembrane region" description="Helical" evidence="2">
    <location>
        <begin position="377"/>
        <end position="397"/>
    </location>
</feature>
<feature type="transmembrane region" description="Helical" evidence="2">
    <location>
        <begin position="405"/>
        <end position="425"/>
    </location>
</feature>
<evidence type="ECO:0000250" key="1"/>
<evidence type="ECO:0000255" key="2"/>
<evidence type="ECO:0000305" key="3"/>
<protein>
    <recommendedName>
        <fullName>Putative proline/betaine transporter</fullName>
    </recommendedName>
</protein>
<gene>
    <name type="primary">proP</name>
    <name type="ordered locus">SA0531</name>
</gene>
<organism>
    <name type="scientific">Staphylococcus aureus (strain N315)</name>
    <dbReference type="NCBI Taxonomy" id="158879"/>
    <lineage>
        <taxon>Bacteria</taxon>
        <taxon>Bacillati</taxon>
        <taxon>Bacillota</taxon>
        <taxon>Bacilli</taxon>
        <taxon>Bacillales</taxon>
        <taxon>Staphylococcaceae</taxon>
        <taxon>Staphylococcus</taxon>
    </lineage>
</organism>